<name>RNH2_METM7</name>
<protein>
    <recommendedName>
        <fullName evidence="1">Ribonuclease HII</fullName>
        <shortName evidence="1">RNase HII</shortName>
        <ecNumber evidence="1">3.1.26.4</ecNumber>
    </recommendedName>
</protein>
<accession>A6VGW0</accession>
<feature type="chain" id="PRO_0000334981" description="Ribonuclease HII">
    <location>
        <begin position="1"/>
        <end position="239"/>
    </location>
</feature>
<feature type="domain" description="RNase H type-2" evidence="2">
    <location>
        <begin position="18"/>
        <end position="231"/>
    </location>
</feature>
<feature type="binding site" evidence="1">
    <location>
        <position position="24"/>
    </location>
    <ligand>
        <name>a divalent metal cation</name>
        <dbReference type="ChEBI" id="CHEBI:60240"/>
    </ligand>
</feature>
<feature type="binding site" evidence="1">
    <location>
        <position position="25"/>
    </location>
    <ligand>
        <name>a divalent metal cation</name>
        <dbReference type="ChEBI" id="CHEBI:60240"/>
    </ligand>
</feature>
<feature type="binding site" evidence="1">
    <location>
        <position position="125"/>
    </location>
    <ligand>
        <name>a divalent metal cation</name>
        <dbReference type="ChEBI" id="CHEBI:60240"/>
    </ligand>
</feature>
<dbReference type="EC" id="3.1.26.4" evidence="1"/>
<dbReference type="EMBL" id="CP000745">
    <property type="protein sequence ID" value="ABR65686.1"/>
    <property type="molecule type" value="Genomic_DNA"/>
</dbReference>
<dbReference type="SMR" id="A6VGW0"/>
<dbReference type="STRING" id="426368.MmarC7_0619"/>
<dbReference type="KEGG" id="mmz:MmarC7_0619"/>
<dbReference type="eggNOG" id="arCOG04121">
    <property type="taxonomic scope" value="Archaea"/>
</dbReference>
<dbReference type="HOGENOM" id="CLU_036532_0_4_2"/>
<dbReference type="OrthoDB" id="33866at2157"/>
<dbReference type="GO" id="GO:0005737">
    <property type="term" value="C:cytoplasm"/>
    <property type="evidence" value="ECO:0007669"/>
    <property type="project" value="UniProtKB-SubCell"/>
</dbReference>
<dbReference type="GO" id="GO:0032299">
    <property type="term" value="C:ribonuclease H2 complex"/>
    <property type="evidence" value="ECO:0007669"/>
    <property type="project" value="TreeGrafter"/>
</dbReference>
<dbReference type="GO" id="GO:0030145">
    <property type="term" value="F:manganese ion binding"/>
    <property type="evidence" value="ECO:0007669"/>
    <property type="project" value="UniProtKB-UniRule"/>
</dbReference>
<dbReference type="GO" id="GO:0003723">
    <property type="term" value="F:RNA binding"/>
    <property type="evidence" value="ECO:0007669"/>
    <property type="project" value="InterPro"/>
</dbReference>
<dbReference type="GO" id="GO:0004523">
    <property type="term" value="F:RNA-DNA hybrid ribonuclease activity"/>
    <property type="evidence" value="ECO:0007669"/>
    <property type="project" value="UniProtKB-UniRule"/>
</dbReference>
<dbReference type="GO" id="GO:0043137">
    <property type="term" value="P:DNA replication, removal of RNA primer"/>
    <property type="evidence" value="ECO:0007669"/>
    <property type="project" value="TreeGrafter"/>
</dbReference>
<dbReference type="GO" id="GO:0006298">
    <property type="term" value="P:mismatch repair"/>
    <property type="evidence" value="ECO:0007669"/>
    <property type="project" value="TreeGrafter"/>
</dbReference>
<dbReference type="CDD" id="cd07180">
    <property type="entry name" value="RNase_HII_archaea_like"/>
    <property type="match status" value="1"/>
</dbReference>
<dbReference type="FunFam" id="1.10.10.460:FF:000001">
    <property type="entry name" value="Ribonuclease"/>
    <property type="match status" value="1"/>
</dbReference>
<dbReference type="Gene3D" id="3.30.420.10">
    <property type="entry name" value="Ribonuclease H-like superfamily/Ribonuclease H"/>
    <property type="match status" value="1"/>
</dbReference>
<dbReference type="Gene3D" id="1.10.10.460">
    <property type="entry name" value="Ribonuclease hii. Domain 2"/>
    <property type="match status" value="1"/>
</dbReference>
<dbReference type="HAMAP" id="MF_00052_A">
    <property type="entry name" value="RNase_HII_A"/>
    <property type="match status" value="1"/>
</dbReference>
<dbReference type="InterPro" id="IPR004649">
    <property type="entry name" value="RNase_H2_suA"/>
</dbReference>
<dbReference type="InterPro" id="IPR001352">
    <property type="entry name" value="RNase_HII/HIII"/>
</dbReference>
<dbReference type="InterPro" id="IPR024567">
    <property type="entry name" value="RNase_HII/HIII_dom"/>
</dbReference>
<dbReference type="InterPro" id="IPR020787">
    <property type="entry name" value="RNase_HII_arc"/>
</dbReference>
<dbReference type="InterPro" id="IPR023160">
    <property type="entry name" value="RNase_HII_hlx-loop-hlx_cap_dom"/>
</dbReference>
<dbReference type="InterPro" id="IPR012337">
    <property type="entry name" value="RNaseH-like_sf"/>
</dbReference>
<dbReference type="InterPro" id="IPR036397">
    <property type="entry name" value="RNaseH_sf"/>
</dbReference>
<dbReference type="NCBIfam" id="TIGR00729">
    <property type="entry name" value="ribonuclease HII"/>
    <property type="match status" value="1"/>
</dbReference>
<dbReference type="PANTHER" id="PTHR10954:SF23">
    <property type="entry name" value="RIBONUCLEASE"/>
    <property type="match status" value="1"/>
</dbReference>
<dbReference type="PANTHER" id="PTHR10954">
    <property type="entry name" value="RIBONUCLEASE H2 SUBUNIT A"/>
    <property type="match status" value="1"/>
</dbReference>
<dbReference type="Pfam" id="PF01351">
    <property type="entry name" value="RNase_HII"/>
    <property type="match status" value="1"/>
</dbReference>
<dbReference type="SUPFAM" id="SSF53098">
    <property type="entry name" value="Ribonuclease H-like"/>
    <property type="match status" value="1"/>
</dbReference>
<dbReference type="PROSITE" id="PS51975">
    <property type="entry name" value="RNASE_H_2"/>
    <property type="match status" value="1"/>
</dbReference>
<comment type="function">
    <text evidence="1">Endonuclease that specifically degrades the RNA of RNA-DNA hybrids.</text>
</comment>
<comment type="catalytic activity">
    <reaction evidence="1">
        <text>Endonucleolytic cleavage to 5'-phosphomonoester.</text>
        <dbReference type="EC" id="3.1.26.4"/>
    </reaction>
</comment>
<comment type="cofactor">
    <cofactor evidence="1">
        <name>Mn(2+)</name>
        <dbReference type="ChEBI" id="CHEBI:29035"/>
    </cofactor>
    <cofactor evidence="1">
        <name>Mg(2+)</name>
        <dbReference type="ChEBI" id="CHEBI:18420"/>
    </cofactor>
    <text evidence="1">Manganese or magnesium. Binds 1 divalent metal ion per monomer in the absence of substrate. May bind a second metal ion after substrate binding.</text>
</comment>
<comment type="subcellular location">
    <subcellularLocation>
        <location evidence="1">Cytoplasm</location>
    </subcellularLocation>
</comment>
<comment type="similarity">
    <text evidence="1">Belongs to the RNase HII family.</text>
</comment>
<reference key="1">
    <citation type="submission" date="2007-06" db="EMBL/GenBank/DDBJ databases">
        <title>Complete sequence of Methanococcus maripaludis C7.</title>
        <authorList>
            <consortium name="US DOE Joint Genome Institute"/>
            <person name="Copeland A."/>
            <person name="Lucas S."/>
            <person name="Lapidus A."/>
            <person name="Barry K."/>
            <person name="Glavina del Rio T."/>
            <person name="Dalin E."/>
            <person name="Tice H."/>
            <person name="Pitluck S."/>
            <person name="Clum A."/>
            <person name="Schmutz J."/>
            <person name="Larimer F."/>
            <person name="Land M."/>
            <person name="Hauser L."/>
            <person name="Kyrpides N."/>
            <person name="Anderson I."/>
            <person name="Sieprawska-Lupa M."/>
            <person name="Whitman W.B."/>
            <person name="Richardson P."/>
        </authorList>
    </citation>
    <scope>NUCLEOTIDE SEQUENCE [LARGE SCALE GENOMIC DNA]</scope>
    <source>
        <strain>C7 / ATCC BAA-1331</strain>
    </source>
</reference>
<sequence length="239" mass="27177">MNEDIKNNLNNSDEFNGKIIVGLDEAGRGPVIGPMVIASVKINENDLPKLHDLGLKDSKQLTKKKREELYIKISEICDVKKIVIDPEKIDEQMEIINLNKIELGAFSKLANHFIKENENISIYIDACSSNEQSFSNQFKAKLINKNVEIIAEHKADENYKIVSAASIIAKVTRDNVIEEYKEIFGEIGSGYPSDPKTKKFLKNYVHENKGLPKIARKSWATSKNLLKEIEESKIFQWVK</sequence>
<evidence type="ECO:0000255" key="1">
    <source>
        <dbReference type="HAMAP-Rule" id="MF_00052"/>
    </source>
</evidence>
<evidence type="ECO:0000255" key="2">
    <source>
        <dbReference type="PROSITE-ProRule" id="PRU01319"/>
    </source>
</evidence>
<keyword id="KW-0963">Cytoplasm</keyword>
<keyword id="KW-0255">Endonuclease</keyword>
<keyword id="KW-0378">Hydrolase</keyword>
<keyword id="KW-0464">Manganese</keyword>
<keyword id="KW-0479">Metal-binding</keyword>
<keyword id="KW-0540">Nuclease</keyword>
<organism>
    <name type="scientific">Methanococcus maripaludis (strain C7 / ATCC BAA-1331)</name>
    <dbReference type="NCBI Taxonomy" id="426368"/>
    <lineage>
        <taxon>Archaea</taxon>
        <taxon>Methanobacteriati</taxon>
        <taxon>Methanobacteriota</taxon>
        <taxon>Methanomada group</taxon>
        <taxon>Methanococci</taxon>
        <taxon>Methanococcales</taxon>
        <taxon>Methanococcaceae</taxon>
        <taxon>Methanococcus</taxon>
    </lineage>
</organism>
<gene>
    <name evidence="1" type="primary">rnhB</name>
    <name type="ordered locus">MmarC7_0619</name>
</gene>
<proteinExistence type="inferred from homology"/>